<accession>F4J9A3</accession>
<accession>Q8LAY0</accession>
<accession>Q9SCP0</accession>
<reference key="1">
    <citation type="journal article" date="2000" name="Nature">
        <title>Sequence and analysis of chromosome 3 of the plant Arabidopsis thaliana.</title>
        <authorList>
            <person name="Salanoubat M."/>
            <person name="Lemcke K."/>
            <person name="Rieger M."/>
            <person name="Ansorge W."/>
            <person name="Unseld M."/>
            <person name="Fartmann B."/>
            <person name="Valle G."/>
            <person name="Bloecker H."/>
            <person name="Perez-Alonso M."/>
            <person name="Obermaier B."/>
            <person name="Delseny M."/>
            <person name="Boutry M."/>
            <person name="Grivell L.A."/>
            <person name="Mache R."/>
            <person name="Puigdomenech P."/>
            <person name="De Simone V."/>
            <person name="Choisne N."/>
            <person name="Artiguenave F."/>
            <person name="Robert C."/>
            <person name="Brottier P."/>
            <person name="Wincker P."/>
            <person name="Cattolico L."/>
            <person name="Weissenbach J."/>
            <person name="Saurin W."/>
            <person name="Quetier F."/>
            <person name="Schaefer M."/>
            <person name="Mueller-Auer S."/>
            <person name="Gabel C."/>
            <person name="Fuchs M."/>
            <person name="Benes V."/>
            <person name="Wurmbach E."/>
            <person name="Drzonek H."/>
            <person name="Erfle H."/>
            <person name="Jordan N."/>
            <person name="Bangert S."/>
            <person name="Wiedelmann R."/>
            <person name="Kranz H."/>
            <person name="Voss H."/>
            <person name="Holland R."/>
            <person name="Brandt P."/>
            <person name="Nyakatura G."/>
            <person name="Vezzi A."/>
            <person name="D'Angelo M."/>
            <person name="Pallavicini A."/>
            <person name="Toppo S."/>
            <person name="Simionati B."/>
            <person name="Conrad A."/>
            <person name="Hornischer K."/>
            <person name="Kauer G."/>
            <person name="Loehnert T.-H."/>
            <person name="Nordsiek G."/>
            <person name="Reichelt J."/>
            <person name="Scharfe M."/>
            <person name="Schoen O."/>
            <person name="Bargues M."/>
            <person name="Terol J."/>
            <person name="Climent J."/>
            <person name="Navarro P."/>
            <person name="Collado C."/>
            <person name="Perez-Perez A."/>
            <person name="Ottenwaelder B."/>
            <person name="Duchemin D."/>
            <person name="Cooke R."/>
            <person name="Laudie M."/>
            <person name="Berger-Llauro C."/>
            <person name="Purnelle B."/>
            <person name="Masuy D."/>
            <person name="de Haan M."/>
            <person name="Maarse A.C."/>
            <person name="Alcaraz J.-P."/>
            <person name="Cottet A."/>
            <person name="Casacuberta E."/>
            <person name="Monfort A."/>
            <person name="Argiriou A."/>
            <person name="Flores M."/>
            <person name="Liguori R."/>
            <person name="Vitale D."/>
            <person name="Mannhaupt G."/>
            <person name="Haase D."/>
            <person name="Schoof H."/>
            <person name="Rudd S."/>
            <person name="Zaccaria P."/>
            <person name="Mewes H.-W."/>
            <person name="Mayer K.F.X."/>
            <person name="Kaul S."/>
            <person name="Town C.D."/>
            <person name="Koo H.L."/>
            <person name="Tallon L.J."/>
            <person name="Jenkins J."/>
            <person name="Rooney T."/>
            <person name="Rizzo M."/>
            <person name="Walts A."/>
            <person name="Utterback T."/>
            <person name="Fujii C.Y."/>
            <person name="Shea T.P."/>
            <person name="Creasy T.H."/>
            <person name="Haas B."/>
            <person name="Maiti R."/>
            <person name="Wu D."/>
            <person name="Peterson J."/>
            <person name="Van Aken S."/>
            <person name="Pai G."/>
            <person name="Militscher J."/>
            <person name="Sellers P."/>
            <person name="Gill J.E."/>
            <person name="Feldblyum T.V."/>
            <person name="Preuss D."/>
            <person name="Lin X."/>
            <person name="Nierman W.C."/>
            <person name="Salzberg S.L."/>
            <person name="White O."/>
            <person name="Venter J.C."/>
            <person name="Fraser C.M."/>
            <person name="Kaneko T."/>
            <person name="Nakamura Y."/>
            <person name="Sato S."/>
            <person name="Kato T."/>
            <person name="Asamizu E."/>
            <person name="Sasamoto S."/>
            <person name="Kimura T."/>
            <person name="Idesawa K."/>
            <person name="Kawashima K."/>
            <person name="Kishida Y."/>
            <person name="Kiyokawa C."/>
            <person name="Kohara M."/>
            <person name="Matsumoto M."/>
            <person name="Matsuno A."/>
            <person name="Muraki A."/>
            <person name="Nakayama S."/>
            <person name="Nakazaki N."/>
            <person name="Shinpo S."/>
            <person name="Takeuchi C."/>
            <person name="Wada T."/>
            <person name="Watanabe A."/>
            <person name="Yamada M."/>
            <person name="Yasuda M."/>
            <person name="Tabata S."/>
        </authorList>
    </citation>
    <scope>NUCLEOTIDE SEQUENCE [LARGE SCALE GENOMIC DNA]</scope>
    <source>
        <strain>cv. Columbia</strain>
    </source>
</reference>
<reference key="2">
    <citation type="journal article" date="2017" name="Plant J.">
        <title>Araport11: a complete reannotation of the Arabidopsis thaliana reference genome.</title>
        <authorList>
            <person name="Cheng C.Y."/>
            <person name="Krishnakumar V."/>
            <person name="Chan A.P."/>
            <person name="Thibaud-Nissen F."/>
            <person name="Schobel S."/>
            <person name="Town C.D."/>
        </authorList>
    </citation>
    <scope>GENOME REANNOTATION</scope>
    <source>
        <strain>cv. Columbia</strain>
    </source>
</reference>
<reference key="3">
    <citation type="submission" date="2002-03" db="EMBL/GenBank/DDBJ databases">
        <title>Full-length cDNA from Arabidopsis thaliana.</title>
        <authorList>
            <person name="Brover V.V."/>
            <person name="Troukhan M.E."/>
            <person name="Alexandrov N.A."/>
            <person name="Lu Y.-P."/>
            <person name="Flavell R.B."/>
            <person name="Feldmann K.A."/>
        </authorList>
    </citation>
    <scope>NUCLEOTIDE SEQUENCE [LARGE SCALE MRNA]</scope>
</reference>
<comment type="subcellular location">
    <subcellularLocation>
        <location evidence="1">Membrane</location>
        <topology evidence="4">Multi-pass membrane protein</topology>
    </subcellularLocation>
</comment>
<comment type="similarity">
    <text evidence="4">Belongs to the drug/metabolite transporter (DMT) superfamily. Plant drug/metabolite exporter (P-DME) (TC 2.A.7.4) family.</text>
</comment>
<comment type="sequence caution" evidence="4">
    <conflict type="erroneous initiation">
        <sequence resource="EMBL-CDS" id="AAM65079"/>
    </conflict>
    <text>Truncated N-terminus.</text>
</comment>
<comment type="sequence caution" evidence="4">
    <conflict type="erroneous gene model prediction">
        <sequence resource="EMBL-CDS" id="CAB64224"/>
    </conflict>
</comment>
<evidence type="ECO:0000250" key="1"/>
<evidence type="ECO:0000255" key="2"/>
<evidence type="ECO:0000256" key="3">
    <source>
        <dbReference type="SAM" id="MobiDB-lite"/>
    </source>
</evidence>
<evidence type="ECO:0000305" key="4"/>
<feature type="chain" id="PRO_0000421334" description="WAT1-related protein At3g53210">
    <location>
        <begin position="1"/>
        <end position="369"/>
    </location>
</feature>
<feature type="transmembrane region" description="Helical" evidence="2">
    <location>
        <begin position="12"/>
        <end position="31"/>
    </location>
</feature>
<feature type="transmembrane region" description="Helical" evidence="2">
    <location>
        <begin position="39"/>
        <end position="59"/>
    </location>
</feature>
<feature type="transmembrane region" description="Helical" evidence="2">
    <location>
        <begin position="72"/>
        <end position="92"/>
    </location>
</feature>
<feature type="transmembrane region" description="Helical" evidence="2">
    <location>
        <begin position="103"/>
        <end position="123"/>
    </location>
</feature>
<feature type="transmembrane region" description="Helical" evidence="2">
    <location>
        <begin position="133"/>
        <end position="153"/>
    </location>
</feature>
<feature type="transmembrane region" description="Helical" evidence="2">
    <location>
        <begin position="182"/>
        <end position="202"/>
    </location>
</feature>
<feature type="transmembrane region" description="Helical" evidence="2">
    <location>
        <begin position="214"/>
        <end position="234"/>
    </location>
</feature>
<feature type="transmembrane region" description="Helical" evidence="2">
    <location>
        <begin position="252"/>
        <end position="272"/>
    </location>
</feature>
<feature type="transmembrane region" description="Helical" evidence="2">
    <location>
        <begin position="278"/>
        <end position="298"/>
    </location>
</feature>
<feature type="transmembrane region" description="Helical" evidence="2">
    <location>
        <begin position="303"/>
        <end position="323"/>
    </location>
</feature>
<feature type="domain" description="EamA 1">
    <location>
        <begin position="24"/>
        <end position="150"/>
    </location>
</feature>
<feature type="domain" description="EamA 2">
    <location>
        <begin position="194"/>
        <end position="323"/>
    </location>
</feature>
<feature type="region of interest" description="Disordered" evidence="3">
    <location>
        <begin position="348"/>
        <end position="369"/>
    </location>
</feature>
<feature type="sequence conflict" description="In Ref. 3; AAM65079." evidence="4" ref="3">
    <original>P</original>
    <variation>L</variation>
    <location>
        <position position="3"/>
    </location>
</feature>
<gene>
    <name type="ordered locus">At3g53210</name>
    <name type="ORF">T4D2.140</name>
</gene>
<dbReference type="EMBL" id="AL132958">
    <property type="protein sequence ID" value="CAB64224.1"/>
    <property type="status" value="ALT_SEQ"/>
    <property type="molecule type" value="Genomic_DNA"/>
</dbReference>
<dbReference type="EMBL" id="CP002686">
    <property type="protein sequence ID" value="AEE79048.1"/>
    <property type="molecule type" value="Genomic_DNA"/>
</dbReference>
<dbReference type="EMBL" id="AY087537">
    <property type="protein sequence ID" value="AAM65079.1"/>
    <property type="status" value="ALT_INIT"/>
    <property type="molecule type" value="mRNA"/>
</dbReference>
<dbReference type="PIR" id="T46167">
    <property type="entry name" value="T46167"/>
</dbReference>
<dbReference type="SMR" id="F4J9A3"/>
<dbReference type="BioGRID" id="9804">
    <property type="interactions" value="15"/>
</dbReference>
<dbReference type="IntAct" id="F4J9A3">
    <property type="interactions" value="15"/>
</dbReference>
<dbReference type="PaxDb" id="3702-AT3G53210.1"/>
<dbReference type="EnsemblPlants" id="AT3G53210.1">
    <property type="protein sequence ID" value="AT3G53210.1"/>
    <property type="gene ID" value="AT3G53210"/>
</dbReference>
<dbReference type="Gramene" id="AT3G53210.1">
    <property type="protein sequence ID" value="AT3G53210.1"/>
    <property type="gene ID" value="AT3G53210"/>
</dbReference>
<dbReference type="KEGG" id="ath:AT3G53210"/>
<dbReference type="Araport" id="AT3G53210"/>
<dbReference type="TAIR" id="AT3G53210">
    <property type="gene designation" value="UMAMIT6"/>
</dbReference>
<dbReference type="eggNOG" id="ENOG502SJ5M">
    <property type="taxonomic scope" value="Eukaryota"/>
</dbReference>
<dbReference type="HOGENOM" id="CLU_025359_1_2_1"/>
<dbReference type="InParanoid" id="F4J9A3"/>
<dbReference type="OMA" id="AIQIWVI"/>
<dbReference type="OrthoDB" id="1728340at2759"/>
<dbReference type="PRO" id="PR:F4J9A3"/>
<dbReference type="Proteomes" id="UP000006548">
    <property type="component" value="Chromosome 3"/>
</dbReference>
<dbReference type="ExpressionAtlas" id="F4J9A3">
    <property type="expression patterns" value="baseline and differential"/>
</dbReference>
<dbReference type="GO" id="GO:0016020">
    <property type="term" value="C:membrane"/>
    <property type="evidence" value="ECO:0007669"/>
    <property type="project" value="UniProtKB-SubCell"/>
</dbReference>
<dbReference type="GO" id="GO:0022857">
    <property type="term" value="F:transmembrane transporter activity"/>
    <property type="evidence" value="ECO:0007669"/>
    <property type="project" value="InterPro"/>
</dbReference>
<dbReference type="InterPro" id="IPR000620">
    <property type="entry name" value="EamA_dom"/>
</dbReference>
<dbReference type="InterPro" id="IPR030184">
    <property type="entry name" value="WAT1-related"/>
</dbReference>
<dbReference type="PANTHER" id="PTHR31218">
    <property type="entry name" value="WAT1-RELATED PROTEIN"/>
    <property type="match status" value="1"/>
</dbReference>
<dbReference type="Pfam" id="PF00892">
    <property type="entry name" value="EamA"/>
    <property type="match status" value="2"/>
</dbReference>
<dbReference type="SUPFAM" id="SSF103481">
    <property type="entry name" value="Multidrug resistance efflux transporter EmrE"/>
    <property type="match status" value="2"/>
</dbReference>
<organism>
    <name type="scientific">Arabidopsis thaliana</name>
    <name type="common">Mouse-ear cress</name>
    <dbReference type="NCBI Taxonomy" id="3702"/>
    <lineage>
        <taxon>Eukaryota</taxon>
        <taxon>Viridiplantae</taxon>
        <taxon>Streptophyta</taxon>
        <taxon>Embryophyta</taxon>
        <taxon>Tracheophyta</taxon>
        <taxon>Spermatophyta</taxon>
        <taxon>Magnoliopsida</taxon>
        <taxon>eudicotyledons</taxon>
        <taxon>Gunneridae</taxon>
        <taxon>Pentapetalae</taxon>
        <taxon>rosids</taxon>
        <taxon>malvids</taxon>
        <taxon>Brassicales</taxon>
        <taxon>Brassicaceae</taxon>
        <taxon>Camelineae</taxon>
        <taxon>Arabidopsis</taxon>
    </lineage>
</organism>
<name>WTR26_ARATH</name>
<keyword id="KW-0472">Membrane</keyword>
<keyword id="KW-1185">Reference proteome</keyword>
<keyword id="KW-0677">Repeat</keyword>
<keyword id="KW-0812">Transmembrane</keyword>
<keyword id="KW-1133">Transmembrane helix</keyword>
<proteinExistence type="evidence at transcript level"/>
<protein>
    <recommendedName>
        <fullName>WAT1-related protein At3g53210</fullName>
    </recommendedName>
</protein>
<sequence>MSPIPERAKLHIAMVVFQTGYAGNHVIMRYALNLGVSKLVFPLYRTIVAFSVLAPSAYFLEKKERPAMKISFLIQFFLLGLVGITLNQGFYIFGLDNTSPTFASATENVVPAVSFLMAALLGIEKVEWKRKDGIAKVVGTIVSVAGSLVITLYKGPTIYQPSLNIVNQTIKPEEAEEENKNWTLGCLCLMGHCLCWSSWIVLQSPLLKKYPARFSFVSYSCFFAVIQFFGISAYFERDLERWKIISGGELYALLYTGLVGSAMVFAIQIYVVERGGPLFVSAYLPLQTLIAAVLATLALGEHFYLGGLIGAILIMSGLYLVVMGKSWENQALCQQQQHMISSAASDFGDEEDYHNNKPRSPISQPLISS</sequence>